<comment type="function">
    <text evidence="1 2">Stores iron in a soluble, non-toxic, readily available form. Important for iron homeostasis. Iron is taken up in the ferrous form and deposited as ferric hydroxides after oxidation. Also plays a role in delivery of iron to cells. Mediates iron uptake in capsule cells of the developing kidney (By similarity). Delivery to lysosomes by the cargo receptor NCOA4 for autophagic degradation and release or iron (By similarity).</text>
</comment>
<comment type="subunit">
    <text evidence="2">Oligomer of 24 subunits. There are two types of subunits: L (light) chain and H (heavy) chain. The major chain can be light or heavy, depending on the species and tissue type. The functional molecule forms a roughly spherical shell with a diameter of 12 nm and contains a central cavity into which the insoluble mineral iron core is deposited. Interacts with NCOA4 (By similarity).</text>
</comment>
<comment type="subcellular location">
    <subcellularLocation>
        <location evidence="2">Cytoplasmic vesicle</location>
        <location evidence="2">Autophagosome</location>
    </subcellularLocation>
    <subcellularLocation>
        <location evidence="3">Cytoplasm</location>
    </subcellularLocation>
    <subcellularLocation>
        <location evidence="3">Autolysosome</location>
    </subcellularLocation>
</comment>
<comment type="miscellaneous">
    <text>In horse spleen the light chain is the major chain.</text>
</comment>
<comment type="similarity">
    <text evidence="7">Belongs to the ferritin family.</text>
</comment>
<reference key="1">
    <citation type="journal article" date="1993" name="Biochim. Biophys. Acta">
        <title>Cloning, expression and characterization of horse L-ferritin in Escherichia coli.</title>
        <authorList>
            <person name="Takeda S."/>
            <person name="Ohta M."/>
            <person name="Ebina S."/>
            <person name="Nagayama K."/>
        </authorList>
    </citation>
    <scope>NUCLEOTIDE SEQUENCE [MRNA]</scope>
    <source>
        <tissue>Liver</tissue>
    </source>
</reference>
<reference key="2">
    <citation type="journal article" date="2005" name="DNA Seq.">
        <title>Sequence analysis of canine and equine ferritin H and L subunit cDNAs.</title>
        <authorList>
            <person name="Orino K."/>
            <person name="Miura T."/>
            <person name="Muto S."/>
            <person name="Watanabe K."/>
        </authorList>
    </citation>
    <scope>NUCLEOTIDE SEQUENCE [MRNA]</scope>
    <source>
        <tissue>Leukocyte</tissue>
    </source>
</reference>
<reference key="3">
    <citation type="journal article" date="1981" name="FEBS Lett.">
        <title>Amino acid sequence of horse spleen apoferritin.</title>
        <authorList>
            <person name="Heusterspreute M."/>
            <person name="Crichton R.R."/>
        </authorList>
    </citation>
    <scope>PROTEIN SEQUENCE OF 2-175</scope>
    <scope>ACETYLATION AT SER-2</scope>
    <source>
        <tissue>Spleen</tissue>
    </source>
</reference>
<reference key="4">
    <citation type="journal article" date="1984" name="S. Afr. J. Sci.">
        <title>Amino acid sequence of horse liver ferritin.</title>
        <authorList>
            <person name="Mathijs J.M."/>
            <person name="Crichton R.R."/>
        </authorList>
    </citation>
    <scope>PROTEIN SEQUENCE OF 2-175</scope>
    <source>
        <tissue>Liver</tissue>
    </source>
</reference>
<reference key="5">
    <citation type="journal article" date="1980" name="Nature">
        <title>Helix packing and subunit conformation in horse spleen apoferritin.</title>
        <authorList>
            <person name="Clegg G.A."/>
            <person name="Stansfield R.F.D."/>
            <person name="Bourne P.E."/>
            <person name="Harrison P.M."/>
        </authorList>
    </citation>
    <scope>X-RAY CRYSTALLOGRAPHY (2.8 ANGSTROMS)</scope>
</reference>
<reference key="6">
    <citation type="journal article" date="1994" name="Acta Crystallogr. D">
        <title>A crystallographic study of haem binding to ferritin.</title>
        <authorList>
            <person name="Precigoux G."/>
            <person name="Yariv J."/>
            <person name="Gallois B."/>
            <person name="Dautant A."/>
            <person name="Courseille C."/>
            <person name="D'Estaintot B.L."/>
        </authorList>
    </citation>
    <scope>X-RAY CRYSTALLOGRAPHY (2.6 ANGSTROMS)</scope>
</reference>
<reference key="7">
    <citation type="journal article" date="1997" name="J. Mol. Biol.">
        <title>Comparison of the three-dimensional structures of recombinant human H and horse L ferritins at high resolution.</title>
        <authorList>
            <person name="Hempstead P.D."/>
            <person name="Yewdall S.J."/>
            <person name="Fernie A.R."/>
            <person name="Lawson D.M."/>
            <person name="Artymiuk P.J."/>
            <person name="Rice D.W."/>
            <person name="Ford G.C."/>
            <person name="Harrison P.M."/>
        </authorList>
    </citation>
    <scope>X-RAY CRYSTALLOGRAPHY (1.9 ANGSTROMS)</scope>
</reference>
<dbReference type="EMBL" id="D14523">
    <property type="protein sequence ID" value="BAA03396.1"/>
    <property type="molecule type" value="mRNA"/>
</dbReference>
<dbReference type="EMBL" id="AB175617">
    <property type="protein sequence ID" value="BAD96182.1"/>
    <property type="molecule type" value="mRNA"/>
</dbReference>
<dbReference type="PIR" id="S36118">
    <property type="entry name" value="FRHOL"/>
</dbReference>
<dbReference type="RefSeq" id="NP_001108012.1">
    <property type="nucleotide sequence ID" value="NM_001114540.2"/>
</dbReference>
<dbReference type="PDB" id="1AEW">
    <property type="method" value="X-ray"/>
    <property type="resolution" value="1.95 A"/>
    <property type="chains" value="A=2-175"/>
</dbReference>
<dbReference type="PDB" id="1DAT">
    <property type="method" value="X-ray"/>
    <property type="resolution" value="2.05 A"/>
    <property type="chains" value="A=2-175"/>
</dbReference>
<dbReference type="PDB" id="1GWG">
    <property type="method" value="X-ray"/>
    <property type="resolution" value="2.01 A"/>
    <property type="chains" value="A=2-175"/>
</dbReference>
<dbReference type="PDB" id="1HRS">
    <property type="method" value="X-ray"/>
    <property type="resolution" value="2.60 A"/>
    <property type="chains" value="A=2-175"/>
</dbReference>
<dbReference type="PDB" id="1IER">
    <property type="method" value="X-ray"/>
    <property type="resolution" value="2.26 A"/>
    <property type="chains" value="A=2-175"/>
</dbReference>
<dbReference type="PDB" id="1IES">
    <property type="method" value="X-ray"/>
    <property type="resolution" value="2.60 A"/>
    <property type="chains" value="A/B/C/D/E/F=2-175"/>
</dbReference>
<dbReference type="PDB" id="1XZ1">
    <property type="method" value="X-ray"/>
    <property type="resolution" value="1.75 A"/>
    <property type="chains" value="A=2-175"/>
</dbReference>
<dbReference type="PDB" id="1XZ3">
    <property type="method" value="X-ray"/>
    <property type="resolution" value="1.75 A"/>
    <property type="chains" value="A=2-175"/>
</dbReference>
<dbReference type="PDB" id="2G4H">
    <property type="method" value="X-ray"/>
    <property type="resolution" value="2.00 A"/>
    <property type="chains" value="A=2-175"/>
</dbReference>
<dbReference type="PDB" id="2GYD">
    <property type="method" value="X-ray"/>
    <property type="resolution" value="1.72 A"/>
    <property type="chains" value="A=3-172"/>
</dbReference>
<dbReference type="PDB" id="2V2I">
    <property type="method" value="X-ray"/>
    <property type="resolution" value="2.00 A"/>
    <property type="chains" value="A=2-175"/>
</dbReference>
<dbReference type="PDB" id="2V2J">
    <property type="method" value="X-ray"/>
    <property type="resolution" value="2.22 A"/>
    <property type="chains" value="A=2-175"/>
</dbReference>
<dbReference type="PDB" id="2V2L">
    <property type="method" value="X-ray"/>
    <property type="resolution" value="1.90 A"/>
    <property type="chains" value="A=2-175"/>
</dbReference>
<dbReference type="PDB" id="2V2M">
    <property type="method" value="X-ray"/>
    <property type="resolution" value="1.65 A"/>
    <property type="chains" value="A=2-175"/>
</dbReference>
<dbReference type="PDB" id="2V2N">
    <property type="method" value="X-ray"/>
    <property type="resolution" value="1.55 A"/>
    <property type="chains" value="A=2-175"/>
</dbReference>
<dbReference type="PDB" id="2V2O">
    <property type="method" value="X-ray"/>
    <property type="resolution" value="1.87 A"/>
    <property type="chains" value="A=2-175"/>
</dbReference>
<dbReference type="PDB" id="2V2P">
    <property type="method" value="X-ray"/>
    <property type="resolution" value="1.15 A"/>
    <property type="chains" value="A=2-175"/>
</dbReference>
<dbReference type="PDB" id="2V2R">
    <property type="method" value="X-ray"/>
    <property type="resolution" value="1.90 A"/>
    <property type="chains" value="A=2-175"/>
</dbReference>
<dbReference type="PDB" id="2V2S">
    <property type="method" value="X-ray"/>
    <property type="resolution" value="1.37 A"/>
    <property type="chains" value="A=2-175"/>
</dbReference>
<dbReference type="PDB" id="2W0O">
    <property type="method" value="X-ray"/>
    <property type="resolution" value="1.50 A"/>
    <property type="chains" value="A=2-175"/>
</dbReference>
<dbReference type="PDB" id="2Z5P">
    <property type="method" value="X-ray"/>
    <property type="resolution" value="1.65 A"/>
    <property type="chains" value="A=2-175"/>
</dbReference>
<dbReference type="PDB" id="2Z5Q">
    <property type="method" value="X-ray"/>
    <property type="resolution" value="2.10 A"/>
    <property type="chains" value="A=2-175"/>
</dbReference>
<dbReference type="PDB" id="2Z5R">
    <property type="method" value="X-ray"/>
    <property type="resolution" value="2.50 A"/>
    <property type="chains" value="A=2-175"/>
</dbReference>
<dbReference type="PDB" id="2ZA6">
    <property type="method" value="X-ray"/>
    <property type="resolution" value="1.75 A"/>
    <property type="chains" value="A=1-175"/>
</dbReference>
<dbReference type="PDB" id="2ZA7">
    <property type="method" value="X-ray"/>
    <property type="resolution" value="1.40 A"/>
    <property type="chains" value="A=5-175"/>
</dbReference>
<dbReference type="PDB" id="2ZA8">
    <property type="method" value="X-ray"/>
    <property type="resolution" value="1.40 A"/>
    <property type="chains" value="A=9-175"/>
</dbReference>
<dbReference type="PDB" id="2ZG7">
    <property type="method" value="X-ray"/>
    <property type="resolution" value="1.70 A"/>
    <property type="chains" value="X=2-175"/>
</dbReference>
<dbReference type="PDB" id="2ZG8">
    <property type="method" value="X-ray"/>
    <property type="resolution" value="1.60 A"/>
    <property type="chains" value="X=2-175"/>
</dbReference>
<dbReference type="PDB" id="2ZG9">
    <property type="method" value="X-ray"/>
    <property type="resolution" value="1.75 A"/>
    <property type="chains" value="X=2-175"/>
</dbReference>
<dbReference type="PDB" id="2ZUR">
    <property type="method" value="X-ray"/>
    <property type="resolution" value="1.80 A"/>
    <property type="chains" value="X=2-175"/>
</dbReference>
<dbReference type="PDB" id="3AF7">
    <property type="method" value="X-ray"/>
    <property type="resolution" value="1.58 A"/>
    <property type="chains" value="X=2-175"/>
</dbReference>
<dbReference type="PDB" id="3AF8">
    <property type="method" value="X-ray"/>
    <property type="resolution" value="1.66 A"/>
    <property type="chains" value="X=2-175"/>
</dbReference>
<dbReference type="PDB" id="3AF9">
    <property type="method" value="X-ray"/>
    <property type="resolution" value="1.85 A"/>
    <property type="chains" value="X=2-175"/>
</dbReference>
<dbReference type="PDB" id="3F32">
    <property type="method" value="X-ray"/>
    <property type="resolution" value="1.70 A"/>
    <property type="chains" value="A=2-175"/>
</dbReference>
<dbReference type="PDB" id="3F33">
    <property type="method" value="X-ray"/>
    <property type="resolution" value="1.70 A"/>
    <property type="chains" value="A=2-175"/>
</dbReference>
<dbReference type="PDB" id="3F34">
    <property type="method" value="X-ray"/>
    <property type="resolution" value="1.68 A"/>
    <property type="chains" value="A=2-175"/>
</dbReference>
<dbReference type="PDB" id="3F35">
    <property type="method" value="X-ray"/>
    <property type="resolution" value="1.92 A"/>
    <property type="chains" value="A=2-175"/>
</dbReference>
<dbReference type="PDB" id="3F36">
    <property type="method" value="X-ray"/>
    <property type="resolution" value="1.70 A"/>
    <property type="chains" value="A=2-175"/>
</dbReference>
<dbReference type="PDB" id="3F37">
    <property type="method" value="X-ray"/>
    <property type="resolution" value="1.54 A"/>
    <property type="chains" value="A=2-175"/>
</dbReference>
<dbReference type="PDB" id="3F38">
    <property type="method" value="X-ray"/>
    <property type="resolution" value="1.75 A"/>
    <property type="chains" value="A=2-175"/>
</dbReference>
<dbReference type="PDB" id="3F39">
    <property type="method" value="X-ray"/>
    <property type="resolution" value="1.85 A"/>
    <property type="chains" value="A=2-175"/>
</dbReference>
<dbReference type="PDB" id="3FI6">
    <property type="method" value="X-ray"/>
    <property type="resolution" value="1.80 A"/>
    <property type="chains" value="A=2-175"/>
</dbReference>
<dbReference type="PDB" id="3H7G">
    <property type="method" value="X-ray"/>
    <property type="resolution" value="1.65 A"/>
    <property type="chains" value="A=2-175"/>
</dbReference>
<dbReference type="PDB" id="3NOZ">
    <property type="method" value="X-ray"/>
    <property type="resolution" value="1.52 A"/>
    <property type="chains" value="X=2-175"/>
</dbReference>
<dbReference type="PDB" id="3NP0">
    <property type="method" value="X-ray"/>
    <property type="resolution" value="1.48 A"/>
    <property type="chains" value="X=2-175"/>
</dbReference>
<dbReference type="PDB" id="3NP2">
    <property type="method" value="X-ray"/>
    <property type="resolution" value="1.86 A"/>
    <property type="chains" value="X=2-175"/>
</dbReference>
<dbReference type="PDB" id="3O7R">
    <property type="method" value="X-ray"/>
    <property type="resolution" value="1.90 A"/>
    <property type="chains" value="A=2-175"/>
</dbReference>
<dbReference type="PDB" id="3O7S">
    <property type="method" value="X-ray"/>
    <property type="resolution" value="1.73 A"/>
    <property type="chains" value="A=2-175"/>
</dbReference>
<dbReference type="PDB" id="3RAV">
    <property type="method" value="X-ray"/>
    <property type="resolution" value="1.90 A"/>
    <property type="chains" value="A=2-175"/>
</dbReference>
<dbReference type="PDB" id="3RD0">
    <property type="method" value="X-ray"/>
    <property type="resolution" value="2.00 A"/>
    <property type="chains" value="A=2-175"/>
</dbReference>
<dbReference type="PDB" id="3U90">
    <property type="method" value="X-ray"/>
    <property type="resolution" value="1.90 A"/>
    <property type="chains" value="A=2-175"/>
</dbReference>
<dbReference type="PDB" id="3WVU">
    <property type="method" value="X-ray"/>
    <property type="resolution" value="1.92 A"/>
    <property type="chains" value="A=2-175"/>
</dbReference>
<dbReference type="PDB" id="3WVV">
    <property type="method" value="X-ray"/>
    <property type="resolution" value="1.82 A"/>
    <property type="chains" value="A=2-175"/>
</dbReference>
<dbReference type="PDB" id="3WVW">
    <property type="method" value="X-ray"/>
    <property type="resolution" value="2.00 A"/>
    <property type="chains" value="A=2-175"/>
</dbReference>
<dbReference type="PDB" id="4DE6">
    <property type="method" value="X-ray"/>
    <property type="resolution" value="2.18 A"/>
    <property type="chains" value="A=2-175"/>
</dbReference>
<dbReference type="PDB" id="4V1W">
    <property type="method" value="EM"/>
    <property type="resolution" value="4.70 A"/>
    <property type="chains" value="A/B/C/D/E/F/G/H/I/J/K/L/M/N/O/P/Q/R/S/T/U/V/W/X=2-175"/>
</dbReference>
<dbReference type="PDB" id="4Z3B">
    <property type="method" value="X-ray"/>
    <property type="resolution" value="1.42 A"/>
    <property type="chains" value="A=2-175"/>
</dbReference>
<dbReference type="PDB" id="5AXS">
    <property type="method" value="X-ray"/>
    <property type="resolution" value="1.67 A"/>
    <property type="chains" value="A=2-175"/>
</dbReference>
<dbReference type="PDB" id="5CZU">
    <property type="method" value="X-ray"/>
    <property type="resolution" value="1.60 A"/>
    <property type="chains" value="A=2-175"/>
</dbReference>
<dbReference type="PDB" id="5E1U">
    <property type="method" value="X-ray"/>
    <property type="resolution" value="1.56 A"/>
    <property type="chains" value="A=2-175"/>
</dbReference>
<dbReference type="PDB" id="5E2D">
    <property type="method" value="X-ray"/>
    <property type="resolution" value="1.87 A"/>
    <property type="chains" value="A=2-175"/>
</dbReference>
<dbReference type="PDB" id="5ERJ">
    <property type="method" value="X-ray"/>
    <property type="resolution" value="1.45 A"/>
    <property type="chains" value="A=2-175"/>
</dbReference>
<dbReference type="PDB" id="5ERK">
    <property type="method" value="X-ray"/>
    <property type="resolution" value="2.00 A"/>
    <property type="chains" value="A=2-175"/>
</dbReference>
<dbReference type="PDB" id="5GU0">
    <property type="method" value="X-ray"/>
    <property type="resolution" value="1.95 A"/>
    <property type="chains" value="X=2-175"/>
</dbReference>
<dbReference type="PDB" id="5GU1">
    <property type="method" value="X-ray"/>
    <property type="resolution" value="2.05 A"/>
    <property type="chains" value="X=2-175"/>
</dbReference>
<dbReference type="PDB" id="5GU2">
    <property type="method" value="X-ray"/>
    <property type="resolution" value="2.12 A"/>
    <property type="chains" value="X=2-175"/>
</dbReference>
<dbReference type="PDB" id="5GU3">
    <property type="method" value="X-ray"/>
    <property type="resolution" value="2.03 A"/>
    <property type="chains" value="X=2-175"/>
</dbReference>
<dbReference type="PDB" id="5HQO">
    <property type="method" value="X-ray"/>
    <property type="resolution" value="1.81 A"/>
    <property type="chains" value="A=2-175"/>
</dbReference>
<dbReference type="PDB" id="5IX6">
    <property type="method" value="X-ray"/>
    <property type="resolution" value="1.85 A"/>
    <property type="chains" value="A=2-175"/>
</dbReference>
<dbReference type="PDB" id="5LG2">
    <property type="method" value="X-ray"/>
    <property type="resolution" value="2.22 A"/>
    <property type="chains" value="A=3-173"/>
</dbReference>
<dbReference type="PDB" id="5MIJ">
    <property type="method" value="X-ray"/>
    <property type="resolution" value="1.49 A"/>
    <property type="chains" value="A=2-175"/>
</dbReference>
<dbReference type="PDB" id="5MIK">
    <property type="method" value="X-ray"/>
    <property type="resolution" value="1.96 A"/>
    <property type="chains" value="A=2-175"/>
</dbReference>
<dbReference type="PDB" id="6ENV">
    <property type="method" value="X-ray"/>
    <property type="resolution" value="1.82 A"/>
    <property type="chains" value="A=2-175"/>
</dbReference>
<dbReference type="PDB" id="6ENW">
    <property type="method" value="X-ray"/>
    <property type="resolution" value="2.60 A"/>
    <property type="chains" value="A=2-175"/>
</dbReference>
<dbReference type="PDB" id="6FX8">
    <property type="method" value="X-ray"/>
    <property type="resolution" value="1.80 A"/>
    <property type="chains" value="A=2-175"/>
</dbReference>
<dbReference type="PDB" id="6FX9">
    <property type="method" value="X-ray"/>
    <property type="resolution" value="1.50 A"/>
    <property type="chains" value="A=2-175"/>
</dbReference>
<dbReference type="PDB" id="6GXJ">
    <property type="method" value="X-ray"/>
    <property type="resolution" value="1.43 A"/>
    <property type="chains" value="A=2-175"/>
</dbReference>
<dbReference type="PDB" id="6HJT">
    <property type="method" value="X-ray"/>
    <property type="resolution" value="1.33 A"/>
    <property type="chains" value="A=2-175"/>
</dbReference>
<dbReference type="PDB" id="6HJU">
    <property type="method" value="X-ray"/>
    <property type="resolution" value="1.58 A"/>
    <property type="chains" value="A=2-175"/>
</dbReference>
<dbReference type="PDB" id="6JEE">
    <property type="method" value="X-ray"/>
    <property type="resolution" value="1.30 A"/>
    <property type="chains" value="A=2-175"/>
</dbReference>
<dbReference type="PDB" id="6JEF">
    <property type="method" value="X-ray"/>
    <property type="resolution" value="1.58 A"/>
    <property type="chains" value="A=2-175"/>
</dbReference>
<dbReference type="PDB" id="6MSX">
    <property type="method" value="X-ray"/>
    <property type="resolution" value="1.43 A"/>
    <property type="chains" value="A=2-175"/>
</dbReference>
<dbReference type="PDB" id="6PXM">
    <property type="method" value="EM"/>
    <property type="resolution" value="2.10 A"/>
    <property type="chains" value="A/B/C/D/E/F/G/H/I/J/K/L/M/N/O/P/Q/R/S/T/V/W/X/Y=1-175"/>
</dbReference>
<dbReference type="PDB" id="6RA8">
    <property type="method" value="X-ray"/>
    <property type="resolution" value="2.00 A"/>
    <property type="chains" value="A=2-174"/>
</dbReference>
<dbReference type="PDB" id="6RJH">
    <property type="method" value="EM"/>
    <property type="resolution" value="2.00 A"/>
    <property type="chains" value="A/B/C/D/E/F/G/H/I/J/K/L/M/N/O/P/Q/R/S/T/U/V/W/X=3-173"/>
</dbReference>
<dbReference type="PDB" id="6TRZ">
    <property type="method" value="X-ray"/>
    <property type="resolution" value="2.02 A"/>
    <property type="chains" value="AAA=1-175"/>
</dbReference>
<dbReference type="PDB" id="6TSS">
    <property type="method" value="X-ray"/>
    <property type="resolution" value="2.18 A"/>
    <property type="chains" value="AAA=1-175"/>
</dbReference>
<dbReference type="PDB" id="6TSX">
    <property type="method" value="X-ray"/>
    <property type="resolution" value="2.02 A"/>
    <property type="chains" value="AAA=1-175"/>
</dbReference>
<dbReference type="PDB" id="7BD7">
    <property type="method" value="X-ray"/>
    <property type="resolution" value="1.50 A"/>
    <property type="chains" value="A=2-173"/>
</dbReference>
<dbReference type="PDB" id="7BOM">
    <property type="method" value="X-ray"/>
    <property type="resolution" value="1.93 A"/>
    <property type="chains" value="X=2-175"/>
</dbReference>
<dbReference type="PDB" id="7BON">
    <property type="method" value="X-ray"/>
    <property type="resolution" value="1.48 A"/>
    <property type="chains" value="A=2-175"/>
</dbReference>
<dbReference type="PDB" id="7EML">
    <property type="method" value="X-ray"/>
    <property type="resolution" value="1.25 A"/>
    <property type="chains" value="A=2-175"/>
</dbReference>
<dbReference type="PDB" id="7EMM">
    <property type="method" value="X-ray"/>
    <property type="resolution" value="1.25 A"/>
    <property type="chains" value="A=2-175"/>
</dbReference>
<dbReference type="PDB" id="7RYW">
    <property type="method" value="X-ray"/>
    <property type="resolution" value="2.09 A"/>
    <property type="chains" value="A=2-175"/>
</dbReference>
<dbReference type="PDB" id="7RZN">
    <property type="method" value="X-ray"/>
    <property type="resolution" value="1.97 A"/>
    <property type="chains" value="A=2-175"/>
</dbReference>
<dbReference type="PDB" id="7RZX">
    <property type="method" value="X-ray"/>
    <property type="resolution" value="2.44 A"/>
    <property type="chains" value="A=2-175"/>
</dbReference>
<dbReference type="PDB" id="7VIO">
    <property type="method" value="X-ray"/>
    <property type="resolution" value="1.50 A"/>
    <property type="chains" value="A=2-175"/>
</dbReference>
<dbReference type="PDB" id="7VIP">
    <property type="method" value="X-ray"/>
    <property type="resolution" value="1.90 A"/>
    <property type="chains" value="A=2-175"/>
</dbReference>
<dbReference type="PDB" id="7VIQ">
    <property type="method" value="X-ray"/>
    <property type="resolution" value="1.90 A"/>
    <property type="chains" value="A=2-175"/>
</dbReference>
<dbReference type="PDB" id="7VIR">
    <property type="method" value="X-ray"/>
    <property type="resolution" value="1.90 A"/>
    <property type="chains" value="A=2-175"/>
</dbReference>
<dbReference type="PDB" id="7VIS">
    <property type="method" value="X-ray"/>
    <property type="resolution" value="1.85 A"/>
    <property type="chains" value="A=2-175"/>
</dbReference>
<dbReference type="PDB" id="7VIT">
    <property type="method" value="X-ray"/>
    <property type="resolution" value="1.90 A"/>
    <property type="chains" value="A=2-175"/>
</dbReference>
<dbReference type="PDB" id="7VIU">
    <property type="method" value="X-ray"/>
    <property type="resolution" value="1.50 A"/>
    <property type="chains" value="A=2-175"/>
</dbReference>
<dbReference type="PDB" id="7W7J">
    <property type="method" value="X-ray"/>
    <property type="resolution" value="1.50 A"/>
    <property type="chains" value="A=2-175"/>
</dbReference>
<dbReference type="PDB" id="8B7L">
    <property type="method" value="X-ray"/>
    <property type="resolution" value="1.24 A"/>
    <property type="chains" value="AAA=2-175"/>
</dbReference>
<dbReference type="PDB" id="8H8L">
    <property type="method" value="X-ray"/>
    <property type="resolution" value="1.50 A"/>
    <property type="chains" value="A=2-175"/>
</dbReference>
<dbReference type="PDB" id="8H8M">
    <property type="method" value="X-ray"/>
    <property type="resolution" value="1.50 A"/>
    <property type="chains" value="A=2-175"/>
</dbReference>
<dbReference type="PDB" id="8H8N">
    <property type="method" value="X-ray"/>
    <property type="resolution" value="1.50 A"/>
    <property type="chains" value="A=2-175"/>
</dbReference>
<dbReference type="PDB" id="8H8O">
    <property type="method" value="X-ray"/>
    <property type="resolution" value="1.50 A"/>
    <property type="chains" value="A=2-175"/>
</dbReference>
<dbReference type="PDB" id="8I6L">
    <property type="method" value="X-ray"/>
    <property type="resolution" value="1.50 A"/>
    <property type="chains" value="A=2-175"/>
</dbReference>
<dbReference type="PDB" id="8I77">
    <property type="method" value="X-ray"/>
    <property type="resolution" value="1.50 A"/>
    <property type="chains" value="A=2-175"/>
</dbReference>
<dbReference type="PDB" id="8I81">
    <property type="method" value="X-ray"/>
    <property type="resolution" value="1.50 A"/>
    <property type="chains" value="A=2-175"/>
</dbReference>
<dbReference type="PDB" id="8I8Q">
    <property type="method" value="X-ray"/>
    <property type="resolution" value="1.50 A"/>
    <property type="chains" value="A=2-175"/>
</dbReference>
<dbReference type="PDB" id="8I8U">
    <property type="method" value="X-ray"/>
    <property type="resolution" value="1.60 A"/>
    <property type="chains" value="X=2-175"/>
</dbReference>
<dbReference type="PDB" id="8J0U">
    <property type="method" value="X-ray"/>
    <property type="resolution" value="1.50 A"/>
    <property type="chains" value="A=2-175"/>
</dbReference>
<dbReference type="PDB" id="8J0V">
    <property type="method" value="X-ray"/>
    <property type="resolution" value="1.60 A"/>
    <property type="chains" value="X=2-175"/>
</dbReference>
<dbReference type="PDB" id="8J0W">
    <property type="method" value="X-ray"/>
    <property type="resolution" value="1.60 A"/>
    <property type="chains" value="X=2-175"/>
</dbReference>
<dbReference type="PDB" id="8J0X">
    <property type="method" value="X-ray"/>
    <property type="resolution" value="1.60 A"/>
    <property type="chains" value="X=2-175"/>
</dbReference>
<dbReference type="PDB" id="8J0Y">
    <property type="method" value="X-ray"/>
    <property type="resolution" value="1.60 A"/>
    <property type="chains" value="X=2-175"/>
</dbReference>
<dbReference type="PDB" id="8J0Z">
    <property type="method" value="X-ray"/>
    <property type="resolution" value="1.60 A"/>
    <property type="chains" value="X=2-175"/>
</dbReference>
<dbReference type="PDB" id="8J10">
    <property type="method" value="X-ray"/>
    <property type="resolution" value="1.60 A"/>
    <property type="chains" value="X=2-175"/>
</dbReference>
<dbReference type="PDB" id="8J11">
    <property type="method" value="X-ray"/>
    <property type="resolution" value="1.60 A"/>
    <property type="chains" value="X=2-175"/>
</dbReference>
<dbReference type="PDB" id="8J16">
    <property type="method" value="X-ray"/>
    <property type="resolution" value="1.60 A"/>
    <property type="chains" value="X=2-175"/>
</dbReference>
<dbReference type="PDB" id="8KH2">
    <property type="method" value="X-ray"/>
    <property type="resolution" value="2.00 A"/>
    <property type="chains" value="A=2-175"/>
</dbReference>
<dbReference type="PDB" id="9KKP">
    <property type="method" value="X-ray"/>
    <property type="resolution" value="1.60 A"/>
    <property type="chains" value="A=2-175"/>
</dbReference>
<dbReference type="PDB" id="9KKR">
    <property type="method" value="X-ray"/>
    <property type="resolution" value="1.50 A"/>
    <property type="chains" value="A=2-175"/>
</dbReference>
<dbReference type="PDB" id="9KLE">
    <property type="method" value="X-ray"/>
    <property type="resolution" value="1.65 A"/>
    <property type="chains" value="A=2-175"/>
</dbReference>
<dbReference type="PDB" id="9KN7">
    <property type="method" value="X-ray"/>
    <property type="resolution" value="1.50 A"/>
    <property type="chains" value="A=2-175"/>
</dbReference>
<dbReference type="PDB" id="9KN8">
    <property type="method" value="X-ray"/>
    <property type="resolution" value="1.64 A"/>
    <property type="chains" value="A=2-175"/>
</dbReference>
<dbReference type="PDB" id="9KP2">
    <property type="method" value="X-ray"/>
    <property type="resolution" value="1.50 A"/>
    <property type="chains" value="A=2-175"/>
</dbReference>
<dbReference type="PDB" id="9KP5">
    <property type="method" value="X-ray"/>
    <property type="resolution" value="1.50 A"/>
    <property type="chains" value="A=2-175"/>
</dbReference>
<dbReference type="PDB" id="9KP7">
    <property type="method" value="X-ray"/>
    <property type="resolution" value="1.50 A"/>
    <property type="chains" value="A=2-175"/>
</dbReference>
<dbReference type="PDB" id="9KPA">
    <property type="method" value="X-ray"/>
    <property type="resolution" value="1.50 A"/>
    <property type="chains" value="A=2-175"/>
</dbReference>
<dbReference type="PDB" id="9KRS">
    <property type="method" value="X-ray"/>
    <property type="resolution" value="1.53 A"/>
    <property type="chains" value="A=2-175"/>
</dbReference>
<dbReference type="PDBsum" id="1AEW"/>
<dbReference type="PDBsum" id="1DAT"/>
<dbReference type="PDBsum" id="1GWG"/>
<dbReference type="PDBsum" id="1HRS"/>
<dbReference type="PDBsum" id="1IER"/>
<dbReference type="PDBsum" id="1IES"/>
<dbReference type="PDBsum" id="1XZ1"/>
<dbReference type="PDBsum" id="1XZ3"/>
<dbReference type="PDBsum" id="2G4H"/>
<dbReference type="PDBsum" id="2GYD"/>
<dbReference type="PDBsum" id="2V2I"/>
<dbReference type="PDBsum" id="2V2J"/>
<dbReference type="PDBsum" id="2V2L"/>
<dbReference type="PDBsum" id="2V2M"/>
<dbReference type="PDBsum" id="2V2N"/>
<dbReference type="PDBsum" id="2V2O"/>
<dbReference type="PDBsum" id="2V2P"/>
<dbReference type="PDBsum" id="2V2R"/>
<dbReference type="PDBsum" id="2V2S"/>
<dbReference type="PDBsum" id="2W0O"/>
<dbReference type="PDBsum" id="2Z5P"/>
<dbReference type="PDBsum" id="2Z5Q"/>
<dbReference type="PDBsum" id="2Z5R"/>
<dbReference type="PDBsum" id="2ZA6"/>
<dbReference type="PDBsum" id="2ZA7"/>
<dbReference type="PDBsum" id="2ZA8"/>
<dbReference type="PDBsum" id="2ZG7"/>
<dbReference type="PDBsum" id="2ZG8"/>
<dbReference type="PDBsum" id="2ZG9"/>
<dbReference type="PDBsum" id="2ZUR"/>
<dbReference type="PDBsum" id="3AF7"/>
<dbReference type="PDBsum" id="3AF8"/>
<dbReference type="PDBsum" id="3AF9"/>
<dbReference type="PDBsum" id="3F32"/>
<dbReference type="PDBsum" id="3F33"/>
<dbReference type="PDBsum" id="3F34"/>
<dbReference type="PDBsum" id="3F35"/>
<dbReference type="PDBsum" id="3F36"/>
<dbReference type="PDBsum" id="3F37"/>
<dbReference type="PDBsum" id="3F38"/>
<dbReference type="PDBsum" id="3F39"/>
<dbReference type="PDBsum" id="3FI6"/>
<dbReference type="PDBsum" id="3H7G"/>
<dbReference type="PDBsum" id="3NOZ"/>
<dbReference type="PDBsum" id="3NP0"/>
<dbReference type="PDBsum" id="3NP2"/>
<dbReference type="PDBsum" id="3O7R"/>
<dbReference type="PDBsum" id="3O7S"/>
<dbReference type="PDBsum" id="3RAV"/>
<dbReference type="PDBsum" id="3RD0"/>
<dbReference type="PDBsum" id="3U90"/>
<dbReference type="PDBsum" id="3WVU"/>
<dbReference type="PDBsum" id="3WVV"/>
<dbReference type="PDBsum" id="3WVW"/>
<dbReference type="PDBsum" id="4DE6"/>
<dbReference type="PDBsum" id="4V1W"/>
<dbReference type="PDBsum" id="4Z3B"/>
<dbReference type="PDBsum" id="5AXS"/>
<dbReference type="PDBsum" id="5CZU"/>
<dbReference type="PDBsum" id="5E1U"/>
<dbReference type="PDBsum" id="5E2D"/>
<dbReference type="PDBsum" id="5ERJ"/>
<dbReference type="PDBsum" id="5ERK"/>
<dbReference type="PDBsum" id="5GU0"/>
<dbReference type="PDBsum" id="5GU1"/>
<dbReference type="PDBsum" id="5GU2"/>
<dbReference type="PDBsum" id="5GU3"/>
<dbReference type="PDBsum" id="5HQO"/>
<dbReference type="PDBsum" id="5IX6"/>
<dbReference type="PDBsum" id="5LG2"/>
<dbReference type="PDBsum" id="5MIJ"/>
<dbReference type="PDBsum" id="5MIK"/>
<dbReference type="PDBsum" id="6ENV"/>
<dbReference type="PDBsum" id="6ENW"/>
<dbReference type="PDBsum" id="6FX8"/>
<dbReference type="PDBsum" id="6FX9"/>
<dbReference type="PDBsum" id="6GXJ"/>
<dbReference type="PDBsum" id="6HJT"/>
<dbReference type="PDBsum" id="6HJU"/>
<dbReference type="PDBsum" id="6JEE"/>
<dbReference type="PDBsum" id="6JEF"/>
<dbReference type="PDBsum" id="6MSX"/>
<dbReference type="PDBsum" id="6PXM"/>
<dbReference type="PDBsum" id="6RA8"/>
<dbReference type="PDBsum" id="6RJH"/>
<dbReference type="PDBsum" id="6TRZ"/>
<dbReference type="PDBsum" id="6TSS"/>
<dbReference type="PDBsum" id="6TSX"/>
<dbReference type="PDBsum" id="7BD7"/>
<dbReference type="PDBsum" id="7BOM"/>
<dbReference type="PDBsum" id="7BON"/>
<dbReference type="PDBsum" id="7EML"/>
<dbReference type="PDBsum" id="7EMM"/>
<dbReference type="PDBsum" id="7RYW"/>
<dbReference type="PDBsum" id="7RZN"/>
<dbReference type="PDBsum" id="7RZX"/>
<dbReference type="PDBsum" id="7VIO"/>
<dbReference type="PDBsum" id="7VIP"/>
<dbReference type="PDBsum" id="7VIQ"/>
<dbReference type="PDBsum" id="7VIR"/>
<dbReference type="PDBsum" id="7VIS"/>
<dbReference type="PDBsum" id="7VIT"/>
<dbReference type="PDBsum" id="7VIU"/>
<dbReference type="PDBsum" id="7W7J"/>
<dbReference type="PDBsum" id="8B7L"/>
<dbReference type="PDBsum" id="8H8L"/>
<dbReference type="PDBsum" id="8H8M"/>
<dbReference type="PDBsum" id="8H8N"/>
<dbReference type="PDBsum" id="8H8O"/>
<dbReference type="PDBsum" id="8I6L"/>
<dbReference type="PDBsum" id="8I77"/>
<dbReference type="PDBsum" id="8I81"/>
<dbReference type="PDBsum" id="8I8Q"/>
<dbReference type="PDBsum" id="8I8U"/>
<dbReference type="PDBsum" id="8J0U"/>
<dbReference type="PDBsum" id="8J0V"/>
<dbReference type="PDBsum" id="8J0W"/>
<dbReference type="PDBsum" id="8J0X"/>
<dbReference type="PDBsum" id="8J0Y"/>
<dbReference type="PDBsum" id="8J0Z"/>
<dbReference type="PDBsum" id="8J10"/>
<dbReference type="PDBsum" id="8J11"/>
<dbReference type="PDBsum" id="8J16"/>
<dbReference type="PDBsum" id="8KH2"/>
<dbReference type="PDBsum" id="9KKP"/>
<dbReference type="PDBsum" id="9KKR"/>
<dbReference type="PDBsum" id="9KLE"/>
<dbReference type="PDBsum" id="9KN7"/>
<dbReference type="PDBsum" id="9KN8"/>
<dbReference type="PDBsum" id="9KP2"/>
<dbReference type="PDBsum" id="9KP5"/>
<dbReference type="PDBsum" id="9KP7"/>
<dbReference type="PDBsum" id="9KPA"/>
<dbReference type="PDBsum" id="9KRS"/>
<dbReference type="EMDB" id="EMD-0263"/>
<dbReference type="EMDB" id="EMD-20521"/>
<dbReference type="EMDB" id="EMD-25619"/>
<dbReference type="EMDB" id="EMD-2788"/>
<dbReference type="EMDB" id="EMD-41933"/>
<dbReference type="EMDB" id="EMD-4905"/>
<dbReference type="PCDDB" id="P02791"/>
<dbReference type="SASBDB" id="P02791"/>
<dbReference type="SMR" id="P02791"/>
<dbReference type="FunCoup" id="P02791">
    <property type="interactions" value="126"/>
</dbReference>
<dbReference type="STRING" id="9796.ENSECAP00000045456"/>
<dbReference type="ChEMBL" id="CHEMBL1293254"/>
<dbReference type="iPTMnet" id="P02791"/>
<dbReference type="PaxDb" id="9796-ENSECAP00000045456"/>
<dbReference type="PeptideAtlas" id="P02791"/>
<dbReference type="GeneID" id="100051593"/>
<dbReference type="KEGG" id="ecb:100051593"/>
<dbReference type="CTD" id="2512"/>
<dbReference type="InParanoid" id="P02791"/>
<dbReference type="OMA" id="CARADPH"/>
<dbReference type="OrthoDB" id="186462at2759"/>
<dbReference type="EvolutionaryTrace" id="P02791"/>
<dbReference type="Proteomes" id="UP000002281">
    <property type="component" value="Chromosome 10"/>
</dbReference>
<dbReference type="Bgee" id="ENSECAG00000029371">
    <property type="expression patterns" value="Expressed in blood and 23 other cell types or tissues"/>
</dbReference>
<dbReference type="GO" id="GO:0044754">
    <property type="term" value="C:autolysosome"/>
    <property type="evidence" value="ECO:0007669"/>
    <property type="project" value="UniProtKB-SubCell"/>
</dbReference>
<dbReference type="GO" id="GO:0005776">
    <property type="term" value="C:autophagosome"/>
    <property type="evidence" value="ECO:0007669"/>
    <property type="project" value="UniProtKB-SubCell"/>
</dbReference>
<dbReference type="GO" id="GO:0005737">
    <property type="term" value="C:cytoplasm"/>
    <property type="evidence" value="ECO:0000318"/>
    <property type="project" value="GO_Central"/>
</dbReference>
<dbReference type="GO" id="GO:0031410">
    <property type="term" value="C:cytoplasmic vesicle"/>
    <property type="evidence" value="ECO:0007669"/>
    <property type="project" value="UniProtKB-KW"/>
</dbReference>
<dbReference type="GO" id="GO:0070288">
    <property type="term" value="C:ferritin complex"/>
    <property type="evidence" value="ECO:0000250"/>
    <property type="project" value="UniProtKB"/>
</dbReference>
<dbReference type="GO" id="GO:0008199">
    <property type="term" value="F:ferric iron binding"/>
    <property type="evidence" value="ECO:0000318"/>
    <property type="project" value="GO_Central"/>
</dbReference>
<dbReference type="GO" id="GO:0008198">
    <property type="term" value="F:ferrous iron binding"/>
    <property type="evidence" value="ECO:0000318"/>
    <property type="project" value="GO_Central"/>
</dbReference>
<dbReference type="GO" id="GO:0005506">
    <property type="term" value="F:iron ion binding"/>
    <property type="evidence" value="ECO:0000250"/>
    <property type="project" value="UniProtKB"/>
</dbReference>
<dbReference type="GO" id="GO:0006879">
    <property type="term" value="P:intracellular iron ion homeostasis"/>
    <property type="evidence" value="ECO:0007669"/>
    <property type="project" value="UniProtKB-KW"/>
</dbReference>
<dbReference type="GO" id="GO:0006826">
    <property type="term" value="P:iron ion transport"/>
    <property type="evidence" value="ECO:0007669"/>
    <property type="project" value="InterPro"/>
</dbReference>
<dbReference type="CDD" id="cd00904">
    <property type="entry name" value="Ferritin"/>
    <property type="match status" value="1"/>
</dbReference>
<dbReference type="FunFam" id="1.20.1260.10:FF:000009">
    <property type="entry name" value="Ferritin light chain"/>
    <property type="match status" value="1"/>
</dbReference>
<dbReference type="Gene3D" id="1.20.1260.10">
    <property type="match status" value="1"/>
</dbReference>
<dbReference type="InterPro" id="IPR001519">
    <property type="entry name" value="Ferritin"/>
</dbReference>
<dbReference type="InterPro" id="IPR012347">
    <property type="entry name" value="Ferritin-like"/>
</dbReference>
<dbReference type="InterPro" id="IPR009040">
    <property type="entry name" value="Ferritin-like_diiron"/>
</dbReference>
<dbReference type="InterPro" id="IPR009078">
    <property type="entry name" value="Ferritin-like_SF"/>
</dbReference>
<dbReference type="InterPro" id="IPR014034">
    <property type="entry name" value="Ferritin_CS"/>
</dbReference>
<dbReference type="InterPro" id="IPR008331">
    <property type="entry name" value="Ferritin_DPS_dom"/>
</dbReference>
<dbReference type="PANTHER" id="PTHR11431">
    <property type="entry name" value="FERRITIN"/>
    <property type="match status" value="1"/>
</dbReference>
<dbReference type="PANTHER" id="PTHR11431:SF47">
    <property type="entry name" value="FERRITIN LIGHT CHAIN"/>
    <property type="match status" value="1"/>
</dbReference>
<dbReference type="Pfam" id="PF00210">
    <property type="entry name" value="Ferritin"/>
    <property type="match status" value="1"/>
</dbReference>
<dbReference type="SUPFAM" id="SSF47240">
    <property type="entry name" value="Ferritin-like"/>
    <property type="match status" value="1"/>
</dbReference>
<dbReference type="PROSITE" id="PS00540">
    <property type="entry name" value="FERRITIN_1"/>
    <property type="match status" value="1"/>
</dbReference>
<dbReference type="PROSITE" id="PS00204">
    <property type="entry name" value="FERRITIN_2"/>
    <property type="match status" value="1"/>
</dbReference>
<dbReference type="PROSITE" id="PS50905">
    <property type="entry name" value="FERRITIN_LIKE"/>
    <property type="match status" value="1"/>
</dbReference>
<keyword id="KW-0002">3D-structure</keyword>
<keyword id="KW-0007">Acetylation</keyword>
<keyword id="KW-0963">Cytoplasm</keyword>
<keyword id="KW-0968">Cytoplasmic vesicle</keyword>
<keyword id="KW-0903">Direct protein sequencing</keyword>
<keyword id="KW-0408">Iron</keyword>
<keyword id="KW-0409">Iron storage</keyword>
<keyword id="KW-0458">Lysosome</keyword>
<keyword id="KW-0479">Metal-binding</keyword>
<keyword id="KW-1185">Reference proteome</keyword>
<protein>
    <recommendedName>
        <fullName>Ferritin light chain</fullName>
        <shortName>Ferritin L subunit</shortName>
    </recommendedName>
</protein>
<proteinExistence type="evidence at protein level"/>
<accession>P02791</accession>
<accession>Q53VB4</accession>
<evidence type="ECO:0000250" key="1"/>
<evidence type="ECO:0000250" key="2">
    <source>
        <dbReference type="UniProtKB" id="P02792"/>
    </source>
</evidence>
<evidence type="ECO:0000250" key="3">
    <source>
        <dbReference type="UniProtKB" id="P29391"/>
    </source>
</evidence>
<evidence type="ECO:0000255" key="4">
    <source>
        <dbReference type="PROSITE-ProRule" id="PRU00085"/>
    </source>
</evidence>
<evidence type="ECO:0000269" key="5">
    <source>
    </source>
</evidence>
<evidence type="ECO:0000269" key="6">
    <source ref="4"/>
</evidence>
<evidence type="ECO:0000305" key="7"/>
<evidence type="ECO:0007829" key="8">
    <source>
        <dbReference type="PDB" id="1DAT"/>
    </source>
</evidence>
<evidence type="ECO:0007829" key="9">
    <source>
        <dbReference type="PDB" id="2V2P"/>
    </source>
</evidence>
<evidence type="ECO:0007829" key="10">
    <source>
        <dbReference type="PDB" id="7EML"/>
    </source>
</evidence>
<organism>
    <name type="scientific">Equus caballus</name>
    <name type="common">Horse</name>
    <dbReference type="NCBI Taxonomy" id="9796"/>
    <lineage>
        <taxon>Eukaryota</taxon>
        <taxon>Metazoa</taxon>
        <taxon>Chordata</taxon>
        <taxon>Craniata</taxon>
        <taxon>Vertebrata</taxon>
        <taxon>Euteleostomi</taxon>
        <taxon>Mammalia</taxon>
        <taxon>Eutheria</taxon>
        <taxon>Laurasiatheria</taxon>
        <taxon>Perissodactyla</taxon>
        <taxon>Equidae</taxon>
        <taxon>Equus</taxon>
    </lineage>
</organism>
<name>FRIL_HORSE</name>
<feature type="initiator methionine" description="Removed" evidence="5 6">
    <location>
        <position position="1"/>
    </location>
</feature>
<feature type="chain" id="PRO_0000201059" description="Ferritin light chain">
    <location>
        <begin position="2"/>
        <end position="175"/>
    </location>
</feature>
<feature type="domain" description="Ferritin-like diiron" evidence="4">
    <location>
        <begin position="7"/>
        <end position="156"/>
    </location>
</feature>
<feature type="region of interest" description="Catalytic site for iron oxidation">
    <location>
        <begin position="54"/>
        <end position="61"/>
    </location>
</feature>
<feature type="binding site" evidence="4">
    <location>
        <position position="54"/>
    </location>
    <ligand>
        <name>Fe cation</name>
        <dbReference type="ChEBI" id="CHEBI:24875"/>
    </ligand>
</feature>
<feature type="binding site" evidence="4">
    <location>
        <position position="57"/>
    </location>
    <ligand>
        <name>Fe cation</name>
        <dbReference type="ChEBI" id="CHEBI:24875"/>
    </ligand>
</feature>
<feature type="binding site" evidence="4">
    <location>
        <position position="58"/>
    </location>
    <ligand>
        <name>Fe cation</name>
        <dbReference type="ChEBI" id="CHEBI:24875"/>
    </ligand>
</feature>
<feature type="binding site" evidence="4">
    <location>
        <position position="61"/>
    </location>
    <ligand>
        <name>Fe cation</name>
        <dbReference type="ChEBI" id="CHEBI:24875"/>
    </ligand>
</feature>
<feature type="binding site" evidence="4">
    <location>
        <position position="64"/>
    </location>
    <ligand>
        <name>Fe cation</name>
        <dbReference type="ChEBI" id="CHEBI:24875"/>
    </ligand>
</feature>
<feature type="modified residue" description="N-acetylserine" evidence="5">
    <location>
        <position position="2"/>
    </location>
</feature>
<feature type="sequence conflict" description="In Ref. 2; BAA03396." evidence="7" ref="2">
    <original>L</original>
    <variation>P</variation>
    <location>
        <position position="94"/>
    </location>
</feature>
<feature type="sequence conflict" description="In Ref. 1; no nucleotide entry." evidence="7" ref="1">
    <original>DEE</original>
    <variation>NEQ</variation>
    <location>
        <begin position="136"/>
        <end position="138"/>
    </location>
</feature>
<feature type="turn" evidence="10">
    <location>
        <begin position="3"/>
        <end position="5"/>
    </location>
</feature>
<feature type="helix" evidence="9">
    <location>
        <begin position="11"/>
        <end position="38"/>
    </location>
</feature>
<feature type="turn" evidence="9">
    <location>
        <begin position="41"/>
        <end position="43"/>
    </location>
</feature>
<feature type="helix" evidence="9">
    <location>
        <begin position="46"/>
        <end position="73"/>
    </location>
</feature>
<feature type="helix" evidence="9">
    <location>
        <begin position="93"/>
        <end position="120"/>
    </location>
</feature>
<feature type="helix" evidence="9">
    <location>
        <begin position="124"/>
        <end position="133"/>
    </location>
</feature>
<feature type="helix" evidence="9">
    <location>
        <begin position="135"/>
        <end position="158"/>
    </location>
</feature>
<feature type="helix" evidence="9">
    <location>
        <begin position="160"/>
        <end position="170"/>
    </location>
</feature>
<feature type="turn" evidence="8">
    <location>
        <begin position="171"/>
        <end position="174"/>
    </location>
</feature>
<gene>
    <name type="primary">FTL</name>
</gene>
<sequence length="175" mass="19978">MSSQIRQNYSTEVEAAVNRLVNLYLRASYTYLSLGFYFDRDDVALEGVCHFFRELAEEKREGAERLLKMQNQRGGRALFQDLQKPSQDEWGTTLDAMKAAIVLEKSLNQALLDLHALGSAQADPHLCDFLESHFLDEEVKLIKKMGDHLTNIQRLVGSQAGLGEYLFERLTLKHD</sequence>